<name>SCRA_ARALY</name>
<reference key="1">
    <citation type="journal article" date="2001" name="Plant Cell">
        <title>Self-incompatibility in the genus Arabidopsis. Characterization of the S locus in the outcrossing A. lyrata and its autogamous relative A. thaliana.</title>
        <authorList>
            <person name="Kusaba M."/>
            <person name="Dwyer K."/>
            <person name="Hendershot J."/>
            <person name="Vrebalov J."/>
            <person name="Nasrallah J.B."/>
            <person name="Nasrallah M.E."/>
        </authorList>
    </citation>
    <scope>NUCLEOTIDE SEQUENCE [MRNA]</scope>
    <scope>TISSUE SPECIFICITY</scope>
</reference>
<comment type="function">
    <text>Involved in self-incompatibility.</text>
</comment>
<comment type="subcellular location">
    <subcellularLocation>
        <location evidence="1">Secreted</location>
    </subcellularLocation>
</comment>
<comment type="tissue specificity">
    <text evidence="3">Expressed specifically in anthers.</text>
</comment>
<comment type="similarity">
    <text evidence="4">Belongs to the DEFL family.</text>
</comment>
<proteinExistence type="evidence at transcript level"/>
<protein>
    <recommendedName>
        <fullName>Defensin-like protein a</fullName>
    </recommendedName>
    <alternativeName>
        <fullName>S locus cysteine-rich-like protein a</fullName>
    </alternativeName>
</protein>
<organism>
    <name type="scientific">Arabidopsis lyrata</name>
    <name type="common">Lyre-leaved rock-cress</name>
    <name type="synonym">Arabis lyrata</name>
    <dbReference type="NCBI Taxonomy" id="59689"/>
    <lineage>
        <taxon>Eukaryota</taxon>
        <taxon>Viridiplantae</taxon>
        <taxon>Streptophyta</taxon>
        <taxon>Embryophyta</taxon>
        <taxon>Tracheophyta</taxon>
        <taxon>Spermatophyta</taxon>
        <taxon>Magnoliopsida</taxon>
        <taxon>eudicotyledons</taxon>
        <taxon>Gunneridae</taxon>
        <taxon>Pentapetalae</taxon>
        <taxon>rosids</taxon>
        <taxon>malvids</taxon>
        <taxon>Brassicales</taxon>
        <taxon>Brassicaceae</taxon>
        <taxon>Camelineae</taxon>
        <taxon>Arabidopsis</taxon>
    </lineage>
</organism>
<dbReference type="EMBL" id="AB052753">
    <property type="protein sequence ID" value="BAB40984.1"/>
    <property type="molecule type" value="mRNA"/>
</dbReference>
<dbReference type="SMR" id="Q9AVE3"/>
<dbReference type="GO" id="GO:0005576">
    <property type="term" value="C:extracellular region"/>
    <property type="evidence" value="ECO:0007669"/>
    <property type="project" value="UniProtKB-SubCell"/>
</dbReference>
<dbReference type="GO" id="GO:0060320">
    <property type="term" value="P:rejection of self pollen"/>
    <property type="evidence" value="ECO:0007669"/>
    <property type="project" value="UniProtKB-KW"/>
</dbReference>
<dbReference type="GO" id="GO:0007165">
    <property type="term" value="P:signal transduction"/>
    <property type="evidence" value="ECO:0007669"/>
    <property type="project" value="InterPro"/>
</dbReference>
<dbReference type="InterPro" id="IPR010682">
    <property type="entry name" value="SCRL"/>
</dbReference>
<dbReference type="PANTHER" id="PTHR34450:SF9">
    <property type="entry name" value="DEFENSIN-LIKE PROTEIN 242-RELATED"/>
    <property type="match status" value="1"/>
</dbReference>
<dbReference type="PANTHER" id="PTHR34450">
    <property type="entry name" value="DEFENSIN-LIKE PROTEIN 245-RELATED"/>
    <property type="match status" value="1"/>
</dbReference>
<dbReference type="Pfam" id="PF06876">
    <property type="entry name" value="SCRL"/>
    <property type="match status" value="1"/>
</dbReference>
<evidence type="ECO:0000250" key="1"/>
<evidence type="ECO:0000255" key="2"/>
<evidence type="ECO:0000269" key="3">
    <source>
    </source>
</evidence>
<evidence type="ECO:0000305" key="4"/>
<feature type="signal peptide" evidence="2">
    <location>
        <begin position="1"/>
        <end position="23"/>
    </location>
</feature>
<feature type="chain" id="PRO_0000031925" description="Defensin-like protein a">
    <location>
        <begin position="24"/>
        <end position="86"/>
    </location>
</feature>
<feature type="disulfide bond" evidence="1">
    <location>
        <begin position="33"/>
        <end position="81"/>
    </location>
</feature>
<feature type="disulfide bond" evidence="1">
    <location>
        <begin position="43"/>
        <end position="67"/>
    </location>
</feature>
<feature type="disulfide bond" evidence="1">
    <location>
        <begin position="51"/>
        <end position="76"/>
    </location>
</feature>
<feature type="disulfide bond" evidence="1">
    <location>
        <begin position="65"/>
        <end position="78"/>
    </location>
</feature>
<accession>Q9AVE3</accession>
<sequence length="86" mass="9911">MRCSVLFVVSYVIMSLLISHVQGMEDQKWKKVCNLEGNFPGRCVGNGDEQCKRDLTEDGNNPSKCRCRFRAGRRHCRCIYCEVFGM</sequence>
<keyword id="KW-1015">Disulfide bond</keyword>
<keyword id="KW-0964">Secreted</keyword>
<keyword id="KW-0713">Self-incompatibility</keyword>
<keyword id="KW-0732">Signal</keyword>
<gene>
    <name type="primary">SCRa</name>
</gene>